<sequence length="464" mass="51528">MGKRLLDKLWERHVVTTNENGLDLLYIDLHLVHEVTSPQAFEGLRLTNRTVRRPDLTFATMDHNIPTKDVWNITDRIAKQQLDTLRANCKQFQVPLADIGDEEQGIVHVIGPELGLTQPGKTIVCGDSHTATHGAFGALAFGIGTSEVEHVLATQTLWQRKPKAMGIELKGKLQKGVYAKDIILHLLSKYGVAVGTGYVMEFYGETIQVMEMEERMTLCNMAIEGGAKAGIIAPDEKTFAYVKGRKYAPRDYETFEKKWFELYTDADAIYDLHISIDVTDLAPYVTWGTNPSMGVRIDEKLPEKHDVNDERAFSYMGLIPGQSTYDIPVQHVFIGSCTNSRLSDLEIAASVVKGRKVKEGVRALVVPGSKRVRDAAMQKGLHHIFEEAGFEWREPGCSMCLGMNPDQVPEGEHCASTSNRNFEGRQGKGARTHLVSPAMAAAAALYGHFVDIRKESYDGAISYS</sequence>
<protein>
    <recommendedName>
        <fullName evidence="1">3-isopropylmalate dehydratase large subunit</fullName>
        <ecNumber evidence="1">4.2.1.33</ecNumber>
    </recommendedName>
    <alternativeName>
        <fullName evidence="1">Alpha-IPM isomerase</fullName>
        <shortName evidence="1">IPMI</shortName>
    </alternativeName>
    <alternativeName>
        <fullName evidence="1">Isopropylmalate isomerase</fullName>
    </alternativeName>
</protein>
<gene>
    <name evidence="1" type="primary">leuC</name>
    <name type="ordered locus">BCA_1457</name>
</gene>
<feature type="chain" id="PRO_1000149352" description="3-isopropylmalate dehydratase large subunit">
    <location>
        <begin position="1"/>
        <end position="464"/>
    </location>
</feature>
<feature type="binding site" evidence="1">
    <location>
        <position position="337"/>
    </location>
    <ligand>
        <name>[4Fe-4S] cluster</name>
        <dbReference type="ChEBI" id="CHEBI:49883"/>
    </ligand>
</feature>
<feature type="binding site" evidence="1">
    <location>
        <position position="397"/>
    </location>
    <ligand>
        <name>[4Fe-4S] cluster</name>
        <dbReference type="ChEBI" id="CHEBI:49883"/>
    </ligand>
</feature>
<feature type="binding site" evidence="1">
    <location>
        <position position="400"/>
    </location>
    <ligand>
        <name>[4Fe-4S] cluster</name>
        <dbReference type="ChEBI" id="CHEBI:49883"/>
    </ligand>
</feature>
<organism>
    <name type="scientific">Bacillus cereus (strain 03BB102)</name>
    <dbReference type="NCBI Taxonomy" id="572264"/>
    <lineage>
        <taxon>Bacteria</taxon>
        <taxon>Bacillati</taxon>
        <taxon>Bacillota</taxon>
        <taxon>Bacilli</taxon>
        <taxon>Bacillales</taxon>
        <taxon>Bacillaceae</taxon>
        <taxon>Bacillus</taxon>
        <taxon>Bacillus cereus group</taxon>
    </lineage>
</organism>
<name>LEUC_BACC3</name>
<comment type="function">
    <text evidence="1">Catalyzes the isomerization between 2-isopropylmalate and 3-isopropylmalate, via the formation of 2-isopropylmaleate.</text>
</comment>
<comment type="catalytic activity">
    <reaction evidence="1">
        <text>(2R,3S)-3-isopropylmalate = (2S)-2-isopropylmalate</text>
        <dbReference type="Rhea" id="RHEA:32287"/>
        <dbReference type="ChEBI" id="CHEBI:1178"/>
        <dbReference type="ChEBI" id="CHEBI:35121"/>
        <dbReference type="EC" id="4.2.1.33"/>
    </reaction>
</comment>
<comment type="cofactor">
    <cofactor evidence="1">
        <name>[4Fe-4S] cluster</name>
        <dbReference type="ChEBI" id="CHEBI:49883"/>
    </cofactor>
    <text evidence="1">Binds 1 [4Fe-4S] cluster per subunit.</text>
</comment>
<comment type="pathway">
    <text evidence="1">Amino-acid biosynthesis; L-leucine biosynthesis; L-leucine from 3-methyl-2-oxobutanoate: step 2/4.</text>
</comment>
<comment type="subunit">
    <text evidence="1">Heterodimer of LeuC and LeuD.</text>
</comment>
<comment type="similarity">
    <text evidence="1">Belongs to the aconitase/IPM isomerase family. LeuC type 1 subfamily.</text>
</comment>
<reference key="1">
    <citation type="submission" date="2009-02" db="EMBL/GenBank/DDBJ databases">
        <title>Genome sequence of Bacillus cereus 03BB102.</title>
        <authorList>
            <person name="Dodson R.J."/>
            <person name="Jackson P."/>
            <person name="Munk A.C."/>
            <person name="Brettin T."/>
            <person name="Bruce D."/>
            <person name="Detter C."/>
            <person name="Tapia R."/>
            <person name="Han C."/>
            <person name="Sutton G."/>
            <person name="Sims D."/>
        </authorList>
    </citation>
    <scope>NUCLEOTIDE SEQUENCE [LARGE SCALE GENOMIC DNA]</scope>
    <source>
        <strain>03BB102</strain>
    </source>
</reference>
<accession>C1EMB1</accession>
<evidence type="ECO:0000255" key="1">
    <source>
        <dbReference type="HAMAP-Rule" id="MF_01026"/>
    </source>
</evidence>
<keyword id="KW-0004">4Fe-4S</keyword>
<keyword id="KW-0028">Amino-acid biosynthesis</keyword>
<keyword id="KW-0100">Branched-chain amino acid biosynthesis</keyword>
<keyword id="KW-0408">Iron</keyword>
<keyword id="KW-0411">Iron-sulfur</keyword>
<keyword id="KW-0432">Leucine biosynthesis</keyword>
<keyword id="KW-0456">Lyase</keyword>
<keyword id="KW-0479">Metal-binding</keyword>
<dbReference type="EC" id="4.2.1.33" evidence="1"/>
<dbReference type="EMBL" id="CP001407">
    <property type="protein sequence ID" value="ACO25910.1"/>
    <property type="molecule type" value="Genomic_DNA"/>
</dbReference>
<dbReference type="RefSeq" id="WP_000520129.1">
    <property type="nucleotide sequence ID" value="NZ_CP009318.1"/>
</dbReference>
<dbReference type="SMR" id="C1EMB1"/>
<dbReference type="KEGG" id="bcx:BCA_1457"/>
<dbReference type="PATRIC" id="fig|572264.18.peg.1407"/>
<dbReference type="UniPathway" id="UPA00048">
    <property type="reaction ID" value="UER00071"/>
</dbReference>
<dbReference type="Proteomes" id="UP000002210">
    <property type="component" value="Chromosome"/>
</dbReference>
<dbReference type="GO" id="GO:0003861">
    <property type="term" value="F:3-isopropylmalate dehydratase activity"/>
    <property type="evidence" value="ECO:0007669"/>
    <property type="project" value="UniProtKB-UniRule"/>
</dbReference>
<dbReference type="GO" id="GO:0051539">
    <property type="term" value="F:4 iron, 4 sulfur cluster binding"/>
    <property type="evidence" value="ECO:0007669"/>
    <property type="project" value="UniProtKB-KW"/>
</dbReference>
<dbReference type="GO" id="GO:0046872">
    <property type="term" value="F:metal ion binding"/>
    <property type="evidence" value="ECO:0007669"/>
    <property type="project" value="UniProtKB-KW"/>
</dbReference>
<dbReference type="GO" id="GO:0009098">
    <property type="term" value="P:L-leucine biosynthetic process"/>
    <property type="evidence" value="ECO:0007669"/>
    <property type="project" value="UniProtKB-UniRule"/>
</dbReference>
<dbReference type="CDD" id="cd01583">
    <property type="entry name" value="IPMI"/>
    <property type="match status" value="1"/>
</dbReference>
<dbReference type="FunFam" id="3.30.499.10:FF:000007">
    <property type="entry name" value="3-isopropylmalate dehydratase large subunit"/>
    <property type="match status" value="1"/>
</dbReference>
<dbReference type="Gene3D" id="3.30.499.10">
    <property type="entry name" value="Aconitase, domain 3"/>
    <property type="match status" value="2"/>
</dbReference>
<dbReference type="HAMAP" id="MF_01026">
    <property type="entry name" value="LeuC_type1"/>
    <property type="match status" value="1"/>
</dbReference>
<dbReference type="InterPro" id="IPR004430">
    <property type="entry name" value="3-IsopropMal_deHydase_lsu"/>
</dbReference>
<dbReference type="InterPro" id="IPR015931">
    <property type="entry name" value="Acnase/IPM_dHydase_lsu_aba_1/3"/>
</dbReference>
<dbReference type="InterPro" id="IPR001030">
    <property type="entry name" value="Acoase/IPM_deHydtase_lsu_aba"/>
</dbReference>
<dbReference type="InterPro" id="IPR018136">
    <property type="entry name" value="Aconitase_4Fe-4S_BS"/>
</dbReference>
<dbReference type="InterPro" id="IPR036008">
    <property type="entry name" value="Aconitase_4Fe-4S_dom"/>
</dbReference>
<dbReference type="InterPro" id="IPR050067">
    <property type="entry name" value="IPM_dehydratase_rel_enz"/>
</dbReference>
<dbReference type="InterPro" id="IPR033941">
    <property type="entry name" value="IPMI_cat"/>
</dbReference>
<dbReference type="NCBIfam" id="TIGR00170">
    <property type="entry name" value="leuC"/>
    <property type="match status" value="1"/>
</dbReference>
<dbReference type="NCBIfam" id="NF004016">
    <property type="entry name" value="PRK05478.1"/>
    <property type="match status" value="1"/>
</dbReference>
<dbReference type="NCBIfam" id="NF009116">
    <property type="entry name" value="PRK12466.1"/>
    <property type="match status" value="1"/>
</dbReference>
<dbReference type="PANTHER" id="PTHR43822:SF9">
    <property type="entry name" value="3-ISOPROPYLMALATE DEHYDRATASE"/>
    <property type="match status" value="1"/>
</dbReference>
<dbReference type="PANTHER" id="PTHR43822">
    <property type="entry name" value="HOMOACONITASE, MITOCHONDRIAL-RELATED"/>
    <property type="match status" value="1"/>
</dbReference>
<dbReference type="Pfam" id="PF00330">
    <property type="entry name" value="Aconitase"/>
    <property type="match status" value="1"/>
</dbReference>
<dbReference type="PRINTS" id="PR00415">
    <property type="entry name" value="ACONITASE"/>
</dbReference>
<dbReference type="SUPFAM" id="SSF53732">
    <property type="entry name" value="Aconitase iron-sulfur domain"/>
    <property type="match status" value="1"/>
</dbReference>
<dbReference type="PROSITE" id="PS00450">
    <property type="entry name" value="ACONITASE_1"/>
    <property type="match status" value="1"/>
</dbReference>
<dbReference type="PROSITE" id="PS01244">
    <property type="entry name" value="ACONITASE_2"/>
    <property type="match status" value="1"/>
</dbReference>
<proteinExistence type="inferred from homology"/>